<comment type="subcellular location">
    <subcellularLocation>
        <location evidence="1">Cytoplasm</location>
    </subcellularLocation>
</comment>
<comment type="similarity">
    <text evidence="1">Belongs to the TACO1 family.</text>
</comment>
<keyword id="KW-0963">Cytoplasm</keyword>
<keyword id="KW-0238">DNA-binding</keyword>
<keyword id="KW-0804">Transcription</keyword>
<keyword id="KW-0805">Transcription regulation</keyword>
<protein>
    <recommendedName>
        <fullName evidence="1">Probable transcriptional regulatory protein A1E_02520</fullName>
    </recommendedName>
</protein>
<feature type="chain" id="PRO_1000045367" description="Probable transcriptional regulatory protein A1E_02520">
    <location>
        <begin position="1"/>
        <end position="252"/>
    </location>
</feature>
<name>Y2520_RICCK</name>
<evidence type="ECO:0000255" key="1">
    <source>
        <dbReference type="HAMAP-Rule" id="MF_00693"/>
    </source>
</evidence>
<sequence length="252" mass="28160">MAGHSKFKNIQYRKGAQDKKRAKIFTKLIREIVTAAKTGSSNNPENNPRLRNALTAARSQNLPKERIDKAINSANDASNTENYMEIRYEGYAPSGIAIIVEALTDNKNRTAAEVRSSFTKYGGSLGETGSVNYLFKHCGVIQYLSNIVSSENILEAVMEVDVDDITSDDTIHTIYTDIENFSKVLEFLTGKYGIPEDSYIGWIPLNTIIIDDKEKAEKLLKLVEVLEESDDVQRVFSNYELSDDVYAIIQGA</sequence>
<dbReference type="EMBL" id="CP000409">
    <property type="protein sequence ID" value="ABV73449.1"/>
    <property type="molecule type" value="Genomic_DNA"/>
</dbReference>
<dbReference type="RefSeq" id="WP_012148646.1">
    <property type="nucleotide sequence ID" value="NC_009879.1"/>
</dbReference>
<dbReference type="SMR" id="A8EYL6"/>
<dbReference type="STRING" id="293613.A1E_02520"/>
<dbReference type="KEGG" id="rcm:A1E_02520"/>
<dbReference type="eggNOG" id="COG0217">
    <property type="taxonomic scope" value="Bacteria"/>
</dbReference>
<dbReference type="HOGENOM" id="CLU_062974_2_2_5"/>
<dbReference type="Proteomes" id="UP000007056">
    <property type="component" value="Chromosome"/>
</dbReference>
<dbReference type="GO" id="GO:0005737">
    <property type="term" value="C:cytoplasm"/>
    <property type="evidence" value="ECO:0007669"/>
    <property type="project" value="UniProtKB-SubCell"/>
</dbReference>
<dbReference type="GO" id="GO:0003677">
    <property type="term" value="F:DNA binding"/>
    <property type="evidence" value="ECO:0007669"/>
    <property type="project" value="UniProtKB-UniRule"/>
</dbReference>
<dbReference type="GO" id="GO:0006355">
    <property type="term" value="P:regulation of DNA-templated transcription"/>
    <property type="evidence" value="ECO:0007669"/>
    <property type="project" value="UniProtKB-UniRule"/>
</dbReference>
<dbReference type="FunFam" id="1.10.10.200:FF:000002">
    <property type="entry name" value="Probable transcriptional regulatory protein CLM62_37755"/>
    <property type="match status" value="1"/>
</dbReference>
<dbReference type="Gene3D" id="1.10.10.200">
    <property type="match status" value="1"/>
</dbReference>
<dbReference type="Gene3D" id="3.30.70.980">
    <property type="match status" value="2"/>
</dbReference>
<dbReference type="HAMAP" id="MF_00693">
    <property type="entry name" value="Transcrip_reg_TACO1"/>
    <property type="match status" value="1"/>
</dbReference>
<dbReference type="InterPro" id="IPR017856">
    <property type="entry name" value="Integrase-like_N"/>
</dbReference>
<dbReference type="InterPro" id="IPR048300">
    <property type="entry name" value="TACO1_YebC-like_2nd/3rd_dom"/>
</dbReference>
<dbReference type="InterPro" id="IPR049083">
    <property type="entry name" value="TACO1_YebC_N"/>
</dbReference>
<dbReference type="InterPro" id="IPR002876">
    <property type="entry name" value="Transcrip_reg_TACO1-like"/>
</dbReference>
<dbReference type="InterPro" id="IPR026564">
    <property type="entry name" value="Transcrip_reg_TACO1-like_dom3"/>
</dbReference>
<dbReference type="InterPro" id="IPR029072">
    <property type="entry name" value="YebC-like"/>
</dbReference>
<dbReference type="NCBIfam" id="NF001030">
    <property type="entry name" value="PRK00110.1"/>
    <property type="match status" value="1"/>
</dbReference>
<dbReference type="NCBIfam" id="NF009044">
    <property type="entry name" value="PRK12378.1"/>
    <property type="match status" value="1"/>
</dbReference>
<dbReference type="NCBIfam" id="TIGR01033">
    <property type="entry name" value="YebC/PmpR family DNA-binding transcriptional regulator"/>
    <property type="match status" value="1"/>
</dbReference>
<dbReference type="PANTHER" id="PTHR12532:SF11">
    <property type="match status" value="1"/>
</dbReference>
<dbReference type="PANTHER" id="PTHR12532">
    <property type="entry name" value="TRANSLATIONAL ACTIVATOR OF CYTOCHROME C OXIDASE 1"/>
    <property type="match status" value="1"/>
</dbReference>
<dbReference type="Pfam" id="PF20772">
    <property type="entry name" value="TACO1_YebC_N"/>
    <property type="match status" value="1"/>
</dbReference>
<dbReference type="Pfam" id="PF01709">
    <property type="entry name" value="Transcrip_reg"/>
    <property type="match status" value="1"/>
</dbReference>
<dbReference type="SUPFAM" id="SSF75625">
    <property type="entry name" value="YebC-like"/>
    <property type="match status" value="1"/>
</dbReference>
<organism>
    <name type="scientific">Rickettsia canadensis (strain McKiel)</name>
    <dbReference type="NCBI Taxonomy" id="293613"/>
    <lineage>
        <taxon>Bacteria</taxon>
        <taxon>Pseudomonadati</taxon>
        <taxon>Pseudomonadota</taxon>
        <taxon>Alphaproteobacteria</taxon>
        <taxon>Rickettsiales</taxon>
        <taxon>Rickettsiaceae</taxon>
        <taxon>Rickettsieae</taxon>
        <taxon>Rickettsia</taxon>
        <taxon>belli group</taxon>
    </lineage>
</organism>
<reference key="1">
    <citation type="submission" date="2007-09" db="EMBL/GenBank/DDBJ databases">
        <title>Complete genome sequence of Rickettsia canadensis.</title>
        <authorList>
            <person name="Madan A."/>
            <person name="Fahey J."/>
            <person name="Helton E."/>
            <person name="Ketteman M."/>
            <person name="Madan A."/>
            <person name="Rodrigues S."/>
            <person name="Sanchez A."/>
            <person name="Whiting M."/>
            <person name="Dasch G."/>
            <person name="Eremeeva M."/>
        </authorList>
    </citation>
    <scope>NUCLEOTIDE SEQUENCE [LARGE SCALE GENOMIC DNA]</scope>
    <source>
        <strain>McKiel</strain>
    </source>
</reference>
<gene>
    <name type="ordered locus">A1E_02520</name>
</gene>
<accession>A8EYL6</accession>
<proteinExistence type="inferred from homology"/>